<gene>
    <name evidence="1" type="primary">secY</name>
    <name type="ordered locus">SAV2230</name>
</gene>
<name>SECY_STAAM</name>
<sequence>MIQTLVNFFRTKEVRNKIFFTLAMLVIFKIGTYIPAPGVNPAAFDNPQGSQGATELLNTFGGGALKRFSIFAMGIVPYITASIVMQLLQMDIVPKFSEWAKQGEVGRRKLNNVTRYLAISLAFIQSIGMAFQFNNYLKGALIINQSIMSYLLIALVLTAGTAFLIWLGDQITQFGVGNGISIIIFAGILSTLPASLIQFGQTAFVGQEDTSLAWLKVLGLLVSLILLTVGAIYVLEAVRKIPIQYAKKQTAQRLGSQATYLPLKVNSAGVIPVIFAMAFFLLPRTLTLFYPDKEWAQNIANAANPSSNVGMVVYIVLIILFTYFYAFVQVNPEKMADNLKKQGSYVPGIRPGEQTKKYITKVLYRLTFVGSIFLAVISILPILATKFMGLPQSIQIGGTSLLIVIGVAIETMKSLEAQVSQKEYKGFGGR</sequence>
<accession>Q99S39</accession>
<proteinExistence type="inferred from homology"/>
<organism>
    <name type="scientific">Staphylococcus aureus (strain Mu50 / ATCC 700699)</name>
    <dbReference type="NCBI Taxonomy" id="158878"/>
    <lineage>
        <taxon>Bacteria</taxon>
        <taxon>Bacillati</taxon>
        <taxon>Bacillota</taxon>
        <taxon>Bacilli</taxon>
        <taxon>Bacillales</taxon>
        <taxon>Staphylococcaceae</taxon>
        <taxon>Staphylococcus</taxon>
    </lineage>
</organism>
<feature type="chain" id="PRO_0000131741" description="Protein translocase subunit SecY">
    <location>
        <begin position="1"/>
        <end position="430"/>
    </location>
</feature>
<feature type="transmembrane region" description="Helical" evidence="1">
    <location>
        <begin position="18"/>
        <end position="38"/>
    </location>
</feature>
<feature type="transmembrane region" description="Helical" evidence="1">
    <location>
        <begin position="68"/>
        <end position="88"/>
    </location>
</feature>
<feature type="transmembrane region" description="Helical" evidence="1">
    <location>
        <begin position="117"/>
        <end position="137"/>
    </location>
</feature>
<feature type="transmembrane region" description="Helical" evidence="1">
    <location>
        <begin position="147"/>
        <end position="167"/>
    </location>
</feature>
<feature type="transmembrane region" description="Helical" evidence="1">
    <location>
        <begin position="179"/>
        <end position="199"/>
    </location>
</feature>
<feature type="transmembrane region" description="Helical" evidence="1">
    <location>
        <begin position="217"/>
        <end position="237"/>
    </location>
</feature>
<feature type="transmembrane region" description="Helical" evidence="1">
    <location>
        <begin position="269"/>
        <end position="289"/>
    </location>
</feature>
<feature type="transmembrane region" description="Helical" evidence="1">
    <location>
        <begin position="308"/>
        <end position="328"/>
    </location>
</feature>
<feature type="transmembrane region" description="Helical" evidence="1">
    <location>
        <begin position="368"/>
        <end position="388"/>
    </location>
</feature>
<feature type="transmembrane region" description="Helical" evidence="1">
    <location>
        <begin position="389"/>
        <end position="409"/>
    </location>
</feature>
<keyword id="KW-1003">Cell membrane</keyword>
<keyword id="KW-0472">Membrane</keyword>
<keyword id="KW-0653">Protein transport</keyword>
<keyword id="KW-0811">Translocation</keyword>
<keyword id="KW-0812">Transmembrane</keyword>
<keyword id="KW-1133">Transmembrane helix</keyword>
<keyword id="KW-0813">Transport</keyword>
<evidence type="ECO:0000255" key="1">
    <source>
        <dbReference type="HAMAP-Rule" id="MF_01465"/>
    </source>
</evidence>
<protein>
    <recommendedName>
        <fullName evidence="1">Protein translocase subunit SecY</fullName>
    </recommendedName>
</protein>
<dbReference type="EMBL" id="BA000017">
    <property type="protein sequence ID" value="BAB58392.1"/>
    <property type="molecule type" value="Genomic_DNA"/>
</dbReference>
<dbReference type="RefSeq" id="WP_000616784.1">
    <property type="nucleotide sequence ID" value="NC_002758.2"/>
</dbReference>
<dbReference type="SMR" id="Q99S39"/>
<dbReference type="KEGG" id="sav:SAV2230"/>
<dbReference type="HOGENOM" id="CLU_030313_0_1_9"/>
<dbReference type="PhylomeDB" id="Q99S39"/>
<dbReference type="Proteomes" id="UP000002481">
    <property type="component" value="Chromosome"/>
</dbReference>
<dbReference type="GO" id="GO:0005886">
    <property type="term" value="C:plasma membrane"/>
    <property type="evidence" value="ECO:0007669"/>
    <property type="project" value="UniProtKB-SubCell"/>
</dbReference>
<dbReference type="GO" id="GO:0065002">
    <property type="term" value="P:intracellular protein transmembrane transport"/>
    <property type="evidence" value="ECO:0007669"/>
    <property type="project" value="UniProtKB-UniRule"/>
</dbReference>
<dbReference type="GO" id="GO:0006605">
    <property type="term" value="P:protein targeting"/>
    <property type="evidence" value="ECO:0007669"/>
    <property type="project" value="UniProtKB-UniRule"/>
</dbReference>
<dbReference type="GO" id="GO:0043952">
    <property type="term" value="P:protein transport by the Sec complex"/>
    <property type="evidence" value="ECO:0007669"/>
    <property type="project" value="UniProtKB-UniRule"/>
</dbReference>
<dbReference type="FunFam" id="1.10.3370.10:FF:000001">
    <property type="entry name" value="Preprotein translocase subunit SecY"/>
    <property type="match status" value="1"/>
</dbReference>
<dbReference type="Gene3D" id="1.10.3370.10">
    <property type="entry name" value="SecY subunit domain"/>
    <property type="match status" value="1"/>
</dbReference>
<dbReference type="HAMAP" id="MF_01465">
    <property type="entry name" value="SecY"/>
    <property type="match status" value="1"/>
</dbReference>
<dbReference type="InterPro" id="IPR026593">
    <property type="entry name" value="SecY"/>
</dbReference>
<dbReference type="InterPro" id="IPR002208">
    <property type="entry name" value="SecY/SEC61-alpha"/>
</dbReference>
<dbReference type="InterPro" id="IPR030659">
    <property type="entry name" value="SecY_CS"/>
</dbReference>
<dbReference type="InterPro" id="IPR023201">
    <property type="entry name" value="SecY_dom_sf"/>
</dbReference>
<dbReference type="NCBIfam" id="TIGR00967">
    <property type="entry name" value="3a0501s007"/>
    <property type="match status" value="1"/>
</dbReference>
<dbReference type="PANTHER" id="PTHR10906">
    <property type="entry name" value="SECY/SEC61-ALPHA FAMILY MEMBER"/>
    <property type="match status" value="1"/>
</dbReference>
<dbReference type="Pfam" id="PF00344">
    <property type="entry name" value="SecY"/>
    <property type="match status" value="1"/>
</dbReference>
<dbReference type="PIRSF" id="PIRSF004557">
    <property type="entry name" value="SecY"/>
    <property type="match status" value="1"/>
</dbReference>
<dbReference type="PRINTS" id="PR00303">
    <property type="entry name" value="SECYTRNLCASE"/>
</dbReference>
<dbReference type="SUPFAM" id="SSF103491">
    <property type="entry name" value="Preprotein translocase SecY subunit"/>
    <property type="match status" value="1"/>
</dbReference>
<dbReference type="PROSITE" id="PS00755">
    <property type="entry name" value="SECY_1"/>
    <property type="match status" value="1"/>
</dbReference>
<dbReference type="PROSITE" id="PS00756">
    <property type="entry name" value="SECY_2"/>
    <property type="match status" value="1"/>
</dbReference>
<reference key="1">
    <citation type="journal article" date="2001" name="Lancet">
        <title>Whole genome sequencing of meticillin-resistant Staphylococcus aureus.</title>
        <authorList>
            <person name="Kuroda M."/>
            <person name="Ohta T."/>
            <person name="Uchiyama I."/>
            <person name="Baba T."/>
            <person name="Yuzawa H."/>
            <person name="Kobayashi I."/>
            <person name="Cui L."/>
            <person name="Oguchi A."/>
            <person name="Aoki K."/>
            <person name="Nagai Y."/>
            <person name="Lian J.-Q."/>
            <person name="Ito T."/>
            <person name="Kanamori M."/>
            <person name="Matsumaru H."/>
            <person name="Maruyama A."/>
            <person name="Murakami H."/>
            <person name="Hosoyama A."/>
            <person name="Mizutani-Ui Y."/>
            <person name="Takahashi N.K."/>
            <person name="Sawano T."/>
            <person name="Inoue R."/>
            <person name="Kaito C."/>
            <person name="Sekimizu K."/>
            <person name="Hirakawa H."/>
            <person name="Kuhara S."/>
            <person name="Goto S."/>
            <person name="Yabuzaki J."/>
            <person name="Kanehisa M."/>
            <person name="Yamashita A."/>
            <person name="Oshima K."/>
            <person name="Furuya K."/>
            <person name="Yoshino C."/>
            <person name="Shiba T."/>
            <person name="Hattori M."/>
            <person name="Ogasawara N."/>
            <person name="Hayashi H."/>
            <person name="Hiramatsu K."/>
        </authorList>
    </citation>
    <scope>NUCLEOTIDE SEQUENCE [LARGE SCALE GENOMIC DNA]</scope>
    <source>
        <strain>Mu50 / ATCC 700699</strain>
    </source>
</reference>
<comment type="function">
    <text evidence="1">The central subunit of the protein translocation channel SecYEG. Consists of two halves formed by TMs 1-5 and 6-10. These two domains form a lateral gate at the front which open onto the bilayer between TMs 2 and 7, and are clamped together by SecE at the back. The channel is closed by both a pore ring composed of hydrophobic SecY resides and a short helix (helix 2A) on the extracellular side of the membrane which forms a plug. The plug probably moves laterally to allow the channel to open. The ring and the pore may move independently.</text>
</comment>
<comment type="subunit">
    <text evidence="1">Component of the Sec protein translocase complex. Heterotrimer consisting of SecY, SecE and SecG subunits. The heterotrimers can form oligomers, although 1 heterotrimer is thought to be able to translocate proteins. Interacts with the ribosome. Interacts with SecDF, and other proteins may be involved. Interacts with SecA.</text>
</comment>
<comment type="subcellular location">
    <subcellularLocation>
        <location evidence="1">Cell membrane</location>
        <topology evidence="1">Multi-pass membrane protein</topology>
    </subcellularLocation>
</comment>
<comment type="similarity">
    <text evidence="1">Belongs to the SecY/SEC61-alpha family.</text>
</comment>